<accession>P57824</accession>
<comment type="function">
    <text evidence="1">With EpmB is involved in the beta-lysylation step of the post-translational modification of translation elongation factor P (EF-P). Catalyzes the ATP-dependent activation of (R)-beta-lysine produced by EpmB, forming a lysyl-adenylate, from which the beta-lysyl moiety is then transferred to the epsilon-amino group of a conserved specific lysine residue in EF-P.</text>
</comment>
<comment type="catalytic activity">
    <reaction evidence="1">
        <text>D-beta-lysine + L-lysyl-[protein] + ATP = N(6)-((3R)-3,6-diaminohexanoyl)-L-lysyl-[protein] + AMP + diphosphate + H(+)</text>
        <dbReference type="Rhea" id="RHEA:83435"/>
        <dbReference type="Rhea" id="RHEA-COMP:9752"/>
        <dbReference type="Rhea" id="RHEA-COMP:20131"/>
        <dbReference type="ChEBI" id="CHEBI:15378"/>
        <dbReference type="ChEBI" id="CHEBI:29969"/>
        <dbReference type="ChEBI" id="CHEBI:30616"/>
        <dbReference type="ChEBI" id="CHEBI:33019"/>
        <dbReference type="ChEBI" id="CHEBI:84138"/>
        <dbReference type="ChEBI" id="CHEBI:156053"/>
        <dbReference type="ChEBI" id="CHEBI:456215"/>
    </reaction>
    <physiologicalReaction direction="left-to-right" evidence="1">
        <dbReference type="Rhea" id="RHEA:83436"/>
    </physiologicalReaction>
</comment>
<comment type="subunit">
    <text evidence="1">Homodimer.</text>
</comment>
<comment type="similarity">
    <text evidence="1">Belongs to the class-II aminoacyl-tRNA synthetase family. EpmA subfamily.</text>
</comment>
<sequence>MFEQENWQPSASIENLLARAKIIAEIRRFFTDRGLLEVETPVLSEFGVTDVHLSTFNTTFISPTAEKSKALWLSTSPEYHMKRLLAAGSGPIFQLCHVFRNEEAGQRHNPEFTMLEWYRPHFDMYRLINEVDDLLQQILDCKPTESLSYQFVFQEYVGLDPLSAEKAELVAKAKQYHLQQAEQEDRDTLLQFLFSTVVEPNIGKENPVAVYHFPATQAALAQISSEDHRVAERFEFYYKGLELANGFHELTDVNEQLHRFEQDNVQRQKMGLPQRQIDKRLLGALQAGVPNCSGIALGVDRLLMIALGANAIHEVMAFGIENA</sequence>
<keyword id="KW-0067">ATP-binding</keyword>
<keyword id="KW-0436">Ligase</keyword>
<keyword id="KW-0547">Nucleotide-binding</keyword>
<keyword id="KW-1185">Reference proteome</keyword>
<gene>
    <name evidence="1" type="primary">epmA</name>
    <name type="synonym">yjeA</name>
    <name type="ordered locus">PM0202</name>
</gene>
<organism>
    <name type="scientific">Pasteurella multocida (strain Pm70)</name>
    <dbReference type="NCBI Taxonomy" id="272843"/>
    <lineage>
        <taxon>Bacteria</taxon>
        <taxon>Pseudomonadati</taxon>
        <taxon>Pseudomonadota</taxon>
        <taxon>Gammaproteobacteria</taxon>
        <taxon>Pasteurellales</taxon>
        <taxon>Pasteurellaceae</taxon>
        <taxon>Pasteurella</taxon>
    </lineage>
</organism>
<dbReference type="EC" id="6.3.2.-" evidence="1"/>
<dbReference type="EMBL" id="AE004439">
    <property type="protein sequence ID" value="AAK02286.1"/>
    <property type="molecule type" value="Genomic_DNA"/>
</dbReference>
<dbReference type="RefSeq" id="WP_005723452.1">
    <property type="nucleotide sequence ID" value="NC_002663.1"/>
</dbReference>
<dbReference type="SMR" id="P57824"/>
<dbReference type="STRING" id="272843.PM0202"/>
<dbReference type="EnsemblBacteria" id="AAK02286">
    <property type="protein sequence ID" value="AAK02286"/>
    <property type="gene ID" value="PM0202"/>
</dbReference>
<dbReference type="GeneID" id="77207550"/>
<dbReference type="KEGG" id="pmu:PM0202"/>
<dbReference type="HOGENOM" id="CLU_008255_1_1_6"/>
<dbReference type="OrthoDB" id="9802326at2"/>
<dbReference type="Proteomes" id="UP000000809">
    <property type="component" value="Chromosome"/>
</dbReference>
<dbReference type="GO" id="GO:0005829">
    <property type="term" value="C:cytosol"/>
    <property type="evidence" value="ECO:0007669"/>
    <property type="project" value="TreeGrafter"/>
</dbReference>
<dbReference type="GO" id="GO:0016880">
    <property type="term" value="F:acid-ammonia (or amide) ligase activity"/>
    <property type="evidence" value="ECO:0007669"/>
    <property type="project" value="UniProtKB-UniRule"/>
</dbReference>
<dbReference type="GO" id="GO:0005524">
    <property type="term" value="F:ATP binding"/>
    <property type="evidence" value="ECO:0007669"/>
    <property type="project" value="UniProtKB-UniRule"/>
</dbReference>
<dbReference type="GO" id="GO:0004824">
    <property type="term" value="F:lysine-tRNA ligase activity"/>
    <property type="evidence" value="ECO:0007669"/>
    <property type="project" value="InterPro"/>
</dbReference>
<dbReference type="GO" id="GO:0000049">
    <property type="term" value="F:tRNA binding"/>
    <property type="evidence" value="ECO:0007669"/>
    <property type="project" value="TreeGrafter"/>
</dbReference>
<dbReference type="GO" id="GO:0006430">
    <property type="term" value="P:lysyl-tRNA aminoacylation"/>
    <property type="evidence" value="ECO:0007669"/>
    <property type="project" value="InterPro"/>
</dbReference>
<dbReference type="FunFam" id="3.30.930.10:FF:000017">
    <property type="entry name" value="Elongation factor P--(R)-beta-lysine ligase"/>
    <property type="match status" value="1"/>
</dbReference>
<dbReference type="Gene3D" id="3.30.930.10">
    <property type="entry name" value="Bira Bifunctional Protein, Domain 2"/>
    <property type="match status" value="1"/>
</dbReference>
<dbReference type="HAMAP" id="MF_00174">
    <property type="entry name" value="EF_P_modif_A"/>
    <property type="match status" value="1"/>
</dbReference>
<dbReference type="InterPro" id="IPR004364">
    <property type="entry name" value="Aa-tRNA-synt_II"/>
</dbReference>
<dbReference type="InterPro" id="IPR006195">
    <property type="entry name" value="aa-tRNA-synth_II"/>
</dbReference>
<dbReference type="InterPro" id="IPR045864">
    <property type="entry name" value="aa-tRNA-synth_II/BPL/LPL"/>
</dbReference>
<dbReference type="InterPro" id="IPR004525">
    <property type="entry name" value="EpmA"/>
</dbReference>
<dbReference type="InterPro" id="IPR018149">
    <property type="entry name" value="Lys-tRNA-synth_II_C"/>
</dbReference>
<dbReference type="NCBIfam" id="TIGR00462">
    <property type="entry name" value="genX"/>
    <property type="match status" value="1"/>
</dbReference>
<dbReference type="NCBIfam" id="NF006828">
    <property type="entry name" value="PRK09350.1"/>
    <property type="match status" value="1"/>
</dbReference>
<dbReference type="PANTHER" id="PTHR42918:SF6">
    <property type="entry name" value="ELONGATION FACTOR P--(R)-BETA-LYSINE LIGASE"/>
    <property type="match status" value="1"/>
</dbReference>
<dbReference type="PANTHER" id="PTHR42918">
    <property type="entry name" value="LYSYL-TRNA SYNTHETASE"/>
    <property type="match status" value="1"/>
</dbReference>
<dbReference type="Pfam" id="PF00152">
    <property type="entry name" value="tRNA-synt_2"/>
    <property type="match status" value="1"/>
</dbReference>
<dbReference type="PRINTS" id="PR00982">
    <property type="entry name" value="TRNASYNTHLYS"/>
</dbReference>
<dbReference type="SUPFAM" id="SSF55681">
    <property type="entry name" value="Class II aaRS and biotin synthetases"/>
    <property type="match status" value="1"/>
</dbReference>
<dbReference type="PROSITE" id="PS50862">
    <property type="entry name" value="AA_TRNA_LIGASE_II"/>
    <property type="match status" value="1"/>
</dbReference>
<protein>
    <recommendedName>
        <fullName evidence="1">Elongation factor P--(R)-beta-lysine ligase</fullName>
        <shortName evidence="1">EF-P--(R)-beta-lysine ligase</shortName>
        <ecNumber evidence="1">6.3.2.-</ecNumber>
    </recommendedName>
    <alternativeName>
        <fullName evidence="1">EF-P post-translational modification enzyme A</fullName>
    </alternativeName>
    <alternativeName>
        <fullName evidence="1">EF-P-lysine lysyltransferase</fullName>
    </alternativeName>
</protein>
<reference key="1">
    <citation type="journal article" date="2001" name="Proc. Natl. Acad. Sci. U.S.A.">
        <title>Complete genomic sequence of Pasteurella multocida Pm70.</title>
        <authorList>
            <person name="May B.J."/>
            <person name="Zhang Q."/>
            <person name="Li L.L."/>
            <person name="Paustian M.L."/>
            <person name="Whittam T.S."/>
            <person name="Kapur V."/>
        </authorList>
    </citation>
    <scope>NUCLEOTIDE SEQUENCE [LARGE SCALE GENOMIC DNA]</scope>
    <source>
        <strain>Pm70</strain>
    </source>
</reference>
<proteinExistence type="inferred from homology"/>
<feature type="chain" id="PRO_0000152725" description="Elongation factor P--(R)-beta-lysine ligase">
    <location>
        <begin position="1"/>
        <end position="323"/>
    </location>
</feature>
<feature type="binding site" evidence="1">
    <location>
        <begin position="76"/>
        <end position="78"/>
    </location>
    <ligand>
        <name>substrate</name>
    </ligand>
</feature>
<feature type="binding site" evidence="1">
    <location>
        <begin position="100"/>
        <end position="102"/>
    </location>
    <ligand>
        <name>ATP</name>
        <dbReference type="ChEBI" id="CHEBI:30616"/>
    </ligand>
</feature>
<feature type="binding site" evidence="1">
    <location>
        <position position="109"/>
    </location>
    <ligand>
        <name>ATP</name>
        <dbReference type="ChEBI" id="CHEBI:30616"/>
    </ligand>
</feature>
<feature type="binding site" evidence="1">
    <location>
        <position position="118"/>
    </location>
    <ligand>
        <name>substrate</name>
    </ligand>
</feature>
<feature type="binding site" evidence="1">
    <location>
        <begin position="242"/>
        <end position="243"/>
    </location>
    <ligand>
        <name>ATP</name>
        <dbReference type="ChEBI" id="CHEBI:30616"/>
    </ligand>
</feature>
<feature type="binding site" evidence="1">
    <location>
        <position position="249"/>
    </location>
    <ligand>
        <name>substrate</name>
    </ligand>
</feature>
<feature type="binding site" evidence="1">
    <location>
        <position position="298"/>
    </location>
    <ligand>
        <name>ATP</name>
        <dbReference type="ChEBI" id="CHEBI:30616"/>
    </ligand>
</feature>
<name>EPMA_PASMU</name>
<evidence type="ECO:0000255" key="1">
    <source>
        <dbReference type="HAMAP-Rule" id="MF_00174"/>
    </source>
</evidence>